<sequence>MYPHLTGLGIHDPKQIERYSLRQEAHKDVLKIYFHKQKGEFFAKSVKFKYPRQVKSVLVDSGSHKYKEVTEINRNLTLVIDELNKITKPAKTTEVDVKEKILSDLRHLEKVVSSKIAEIEADLEKLK</sequence>
<protein>
    <recommendedName>
        <fullName evidence="1">UPF0325 protein VIBHAR_03240</fullName>
    </recommendedName>
</protein>
<dbReference type="EMBL" id="CP000789">
    <property type="protein sequence ID" value="ABU72189.1"/>
    <property type="molecule type" value="Genomic_DNA"/>
</dbReference>
<dbReference type="RefSeq" id="WP_005431713.1">
    <property type="nucleotide sequence ID" value="NC_022269.1"/>
</dbReference>
<dbReference type="SMR" id="A7N1Y0"/>
<dbReference type="KEGG" id="vha:VIBHAR_03240"/>
<dbReference type="PATRIC" id="fig|338187.25.peg.2950"/>
<dbReference type="Proteomes" id="UP000008152">
    <property type="component" value="Chromosome I"/>
</dbReference>
<dbReference type="HAMAP" id="MF_01519">
    <property type="entry name" value="UPF0325"/>
    <property type="match status" value="1"/>
</dbReference>
<dbReference type="InterPro" id="IPR020911">
    <property type="entry name" value="UPF0325"/>
</dbReference>
<dbReference type="NCBIfam" id="NF010213">
    <property type="entry name" value="PRK13677.1"/>
    <property type="match status" value="1"/>
</dbReference>
<dbReference type="Pfam" id="PF11944">
    <property type="entry name" value="DUF3461"/>
    <property type="match status" value="1"/>
</dbReference>
<reference key="1">
    <citation type="submission" date="2007-08" db="EMBL/GenBank/DDBJ databases">
        <authorList>
            <consortium name="The Vibrio harveyi Genome Sequencing Project"/>
            <person name="Bassler B."/>
            <person name="Clifton S.W."/>
            <person name="Fulton L."/>
            <person name="Delehaunty K."/>
            <person name="Fronick C."/>
            <person name="Harrison M."/>
            <person name="Markivic C."/>
            <person name="Fulton R."/>
            <person name="Tin-Wollam A.-M."/>
            <person name="Shah N."/>
            <person name="Pepin K."/>
            <person name="Nash W."/>
            <person name="Thiruvilangam P."/>
            <person name="Bhonagiri V."/>
            <person name="Waters C."/>
            <person name="Tu K.C."/>
            <person name="Irgon J."/>
            <person name="Wilson R.K."/>
        </authorList>
    </citation>
    <scope>NUCLEOTIDE SEQUENCE [LARGE SCALE GENOMIC DNA]</scope>
    <source>
        <strain>ATCC BAA-1116 / BB120</strain>
    </source>
</reference>
<accession>A7N1Y0</accession>
<organism>
    <name type="scientific">Vibrio campbellii (strain ATCC BAA-1116)</name>
    <dbReference type="NCBI Taxonomy" id="2902295"/>
    <lineage>
        <taxon>Bacteria</taxon>
        <taxon>Pseudomonadati</taxon>
        <taxon>Pseudomonadota</taxon>
        <taxon>Gammaproteobacteria</taxon>
        <taxon>Vibrionales</taxon>
        <taxon>Vibrionaceae</taxon>
        <taxon>Vibrio</taxon>
    </lineage>
</organism>
<proteinExistence type="inferred from homology"/>
<comment type="similarity">
    <text evidence="1">Belongs to the UPF0325 family.</text>
</comment>
<gene>
    <name type="ordered locus">VIBHAR_03240</name>
</gene>
<name>Y3240_VIBC1</name>
<evidence type="ECO:0000255" key="1">
    <source>
        <dbReference type="HAMAP-Rule" id="MF_01519"/>
    </source>
</evidence>
<feature type="chain" id="PRO_1000068621" description="UPF0325 protein VIBHAR_03240">
    <location>
        <begin position="1"/>
        <end position="127"/>
    </location>
</feature>